<name>NUP37_HUMAN</name>
<accession>Q8NFH4</accession>
<accession>Q9H644</accession>
<reference key="1">
    <citation type="journal article" date="2002" name="J. Cell Biol.">
        <title>Proteomic analysis of the mammalian nuclear pore complex.</title>
        <authorList>
            <person name="Cronshaw J.M."/>
            <person name="Krutchinsky A.N."/>
            <person name="Zhang W."/>
            <person name="Chait B.T."/>
            <person name="Matunis M.J."/>
        </authorList>
    </citation>
    <scope>NUCLEOTIDE SEQUENCE [MRNA]</scope>
    <scope>SUBCELLULAR LOCATION</scope>
</reference>
<reference key="2">
    <citation type="journal article" date="2004" name="Genome Res.">
        <title>The status, quality, and expansion of the NIH full-length cDNA project: the Mammalian Gene Collection (MGC).</title>
        <authorList>
            <consortium name="The MGC Project Team"/>
        </authorList>
    </citation>
    <scope>NUCLEOTIDE SEQUENCE [LARGE SCALE MRNA]</scope>
    <source>
        <tissue>Cervix</tissue>
    </source>
</reference>
<reference key="3">
    <citation type="journal article" date="2004" name="Nat. Genet.">
        <title>Complete sequencing and characterization of 21,243 full-length human cDNAs.</title>
        <authorList>
            <person name="Ota T."/>
            <person name="Suzuki Y."/>
            <person name="Nishikawa T."/>
            <person name="Otsuki T."/>
            <person name="Sugiyama T."/>
            <person name="Irie R."/>
            <person name="Wakamatsu A."/>
            <person name="Hayashi K."/>
            <person name="Sato H."/>
            <person name="Nagai K."/>
            <person name="Kimura K."/>
            <person name="Makita H."/>
            <person name="Sekine M."/>
            <person name="Obayashi M."/>
            <person name="Nishi T."/>
            <person name="Shibahara T."/>
            <person name="Tanaka T."/>
            <person name="Ishii S."/>
            <person name="Yamamoto J."/>
            <person name="Saito K."/>
            <person name="Kawai Y."/>
            <person name="Isono Y."/>
            <person name="Nakamura Y."/>
            <person name="Nagahari K."/>
            <person name="Murakami K."/>
            <person name="Yasuda T."/>
            <person name="Iwayanagi T."/>
            <person name="Wagatsuma M."/>
            <person name="Shiratori A."/>
            <person name="Sudo H."/>
            <person name="Hosoiri T."/>
            <person name="Kaku Y."/>
            <person name="Kodaira H."/>
            <person name="Kondo H."/>
            <person name="Sugawara M."/>
            <person name="Takahashi M."/>
            <person name="Kanda K."/>
            <person name="Yokoi T."/>
            <person name="Furuya T."/>
            <person name="Kikkawa E."/>
            <person name="Omura Y."/>
            <person name="Abe K."/>
            <person name="Kamihara K."/>
            <person name="Katsuta N."/>
            <person name="Sato K."/>
            <person name="Tanikawa M."/>
            <person name="Yamazaki M."/>
            <person name="Ninomiya K."/>
            <person name="Ishibashi T."/>
            <person name="Yamashita H."/>
            <person name="Murakawa K."/>
            <person name="Fujimori K."/>
            <person name="Tanai H."/>
            <person name="Kimata M."/>
            <person name="Watanabe M."/>
            <person name="Hiraoka S."/>
            <person name="Chiba Y."/>
            <person name="Ishida S."/>
            <person name="Ono Y."/>
            <person name="Takiguchi S."/>
            <person name="Watanabe S."/>
            <person name="Yosida M."/>
            <person name="Hotuta T."/>
            <person name="Kusano J."/>
            <person name="Kanehori K."/>
            <person name="Takahashi-Fujii A."/>
            <person name="Hara H."/>
            <person name="Tanase T.-O."/>
            <person name="Nomura Y."/>
            <person name="Togiya S."/>
            <person name="Komai F."/>
            <person name="Hara R."/>
            <person name="Takeuchi K."/>
            <person name="Arita M."/>
            <person name="Imose N."/>
            <person name="Musashino K."/>
            <person name="Yuuki H."/>
            <person name="Oshima A."/>
            <person name="Sasaki N."/>
            <person name="Aotsuka S."/>
            <person name="Yoshikawa Y."/>
            <person name="Matsunawa H."/>
            <person name="Ichihara T."/>
            <person name="Shiohata N."/>
            <person name="Sano S."/>
            <person name="Moriya S."/>
            <person name="Momiyama H."/>
            <person name="Satoh N."/>
            <person name="Takami S."/>
            <person name="Terashima Y."/>
            <person name="Suzuki O."/>
            <person name="Nakagawa S."/>
            <person name="Senoh A."/>
            <person name="Mizoguchi H."/>
            <person name="Goto Y."/>
            <person name="Shimizu F."/>
            <person name="Wakebe H."/>
            <person name="Hishigaki H."/>
            <person name="Watanabe T."/>
            <person name="Sugiyama A."/>
            <person name="Takemoto M."/>
            <person name="Kawakami B."/>
            <person name="Yamazaki M."/>
            <person name="Watanabe K."/>
            <person name="Kumagai A."/>
            <person name="Itakura S."/>
            <person name="Fukuzumi Y."/>
            <person name="Fujimori Y."/>
            <person name="Komiyama M."/>
            <person name="Tashiro H."/>
            <person name="Tanigami A."/>
            <person name="Fujiwara T."/>
            <person name="Ono T."/>
            <person name="Yamada K."/>
            <person name="Fujii Y."/>
            <person name="Ozaki K."/>
            <person name="Hirao M."/>
            <person name="Ohmori Y."/>
            <person name="Kawabata A."/>
            <person name="Hikiji T."/>
            <person name="Kobatake N."/>
            <person name="Inagaki H."/>
            <person name="Ikema Y."/>
            <person name="Okamoto S."/>
            <person name="Okitani R."/>
            <person name="Kawakami T."/>
            <person name="Noguchi S."/>
            <person name="Itoh T."/>
            <person name="Shigeta K."/>
            <person name="Senba T."/>
            <person name="Matsumura K."/>
            <person name="Nakajima Y."/>
            <person name="Mizuno T."/>
            <person name="Morinaga M."/>
            <person name="Sasaki M."/>
            <person name="Togashi T."/>
            <person name="Oyama M."/>
            <person name="Hata H."/>
            <person name="Watanabe M."/>
            <person name="Komatsu T."/>
            <person name="Mizushima-Sugano J."/>
            <person name="Satoh T."/>
            <person name="Shirai Y."/>
            <person name="Takahashi Y."/>
            <person name="Nakagawa K."/>
            <person name="Okumura K."/>
            <person name="Nagase T."/>
            <person name="Nomura N."/>
            <person name="Kikuchi H."/>
            <person name="Masuho Y."/>
            <person name="Yamashita R."/>
            <person name="Nakai K."/>
            <person name="Yada T."/>
            <person name="Nakamura Y."/>
            <person name="Ohara O."/>
            <person name="Isogai T."/>
            <person name="Sugano S."/>
        </authorList>
    </citation>
    <scope>NUCLEOTIDE SEQUENCE [LARGE SCALE MRNA] OF 7-326</scope>
    <source>
        <tissue>Small intestine</tissue>
    </source>
</reference>
<reference key="4">
    <citation type="journal article" date="2004" name="Mol. Biol. Cell">
        <title>The entire Nup107-160 complex, including three new members, is targeted as one entity to kinetochores in mitosis.</title>
        <authorList>
            <person name="Loieodice I."/>
            <person name="Alves A."/>
            <person name="Rabut G."/>
            <person name="Van Overbeek M."/>
            <person name="Ellenberg J."/>
            <person name="Sibarita J.-B."/>
            <person name="Doye V."/>
        </authorList>
    </citation>
    <scope>IDENTIFICATION IN THE NUP107-160 COMPLEX</scope>
    <scope>SUBCELLULAR LOCATION</scope>
</reference>
<reference key="5">
    <citation type="journal article" date="2007" name="EMBO J.">
        <title>The human Nup107-160 nuclear pore subcomplex contributes to proper kinetochore functions.</title>
        <authorList>
            <person name="Zuccolo M."/>
            <person name="Alves A."/>
            <person name="Galy V."/>
            <person name="Bolhy S."/>
            <person name="Formstecher E."/>
            <person name="Racine V."/>
            <person name="Sibarita J.-B."/>
            <person name="Fukagawa T."/>
            <person name="Shiekhattar R."/>
            <person name="Yen T."/>
            <person name="Doye V."/>
        </authorList>
    </citation>
    <scope>FUNCTION OF THE NUP107-160 COMPLEX</scope>
</reference>
<reference key="6">
    <citation type="journal article" date="2007" name="Proc. Natl. Acad. Sci. U.S.A.">
        <title>Cell-cycle-dependent phosphorylation of the nuclear pore Nup107-160 subcomplex.</title>
        <authorList>
            <person name="Glavy J.S."/>
            <person name="Krutchinsky A.N."/>
            <person name="Cristea I.M."/>
            <person name="Berke I.C."/>
            <person name="Boehmer T."/>
            <person name="Blobel G."/>
            <person name="Chait B.T."/>
        </authorList>
    </citation>
    <scope>IDENTIFICATION BY MASS SPECTROMETRY</scope>
    <scope>IDENTIFICATION IN THE NUP107-160 COMPLEX</scope>
</reference>
<reference key="7">
    <citation type="journal article" date="2011" name="BMC Syst. Biol.">
        <title>Initial characterization of the human central proteome.</title>
        <authorList>
            <person name="Burkard T.R."/>
            <person name="Planyavsky M."/>
            <person name="Kaupe I."/>
            <person name="Breitwieser F.P."/>
            <person name="Buerckstuemmer T."/>
            <person name="Bennett K.L."/>
            <person name="Superti-Furga G."/>
            <person name="Colinge J."/>
        </authorList>
    </citation>
    <scope>IDENTIFICATION BY MASS SPECTROMETRY [LARGE SCALE ANALYSIS]</scope>
</reference>
<reference key="8">
    <citation type="journal article" date="2018" name="J. Clin. Invest.">
        <title>Mutations in multiple components of the nuclear pore complex cause nephrotic syndrome.</title>
        <authorList>
            <person name="Braun D.A."/>
            <person name="Lovric S."/>
            <person name="Schapiro D."/>
            <person name="Schneider R."/>
            <person name="Marquez J."/>
            <person name="Asif M."/>
            <person name="Hussain M.S."/>
            <person name="Daga A."/>
            <person name="Widmeier E."/>
            <person name="Rao J."/>
            <person name="Ashraf S."/>
            <person name="Tan W."/>
            <person name="Lusk C.P."/>
            <person name="Kolb A."/>
            <person name="Jobst-Schwan T."/>
            <person name="Schmidt J.M."/>
            <person name="Hoogstraten C.A."/>
            <person name="Eddy K."/>
            <person name="Kitzler T.M."/>
            <person name="Shril S."/>
            <person name="Moawia A."/>
            <person name="Schrage K."/>
            <person name="Khayyat A.I.A."/>
            <person name="Lawson J.A."/>
            <person name="Gee H.Y."/>
            <person name="Warejko J.K."/>
            <person name="Hermle T."/>
            <person name="Majmundar A.J."/>
            <person name="Hugo H."/>
            <person name="Budde B."/>
            <person name="Motameny S."/>
            <person name="Altmueller J."/>
            <person name="Noegel A.A."/>
            <person name="Fathy H.M."/>
            <person name="Gale D.P."/>
            <person name="Waseem S.S."/>
            <person name="Khan A."/>
            <person name="Kerecuk L."/>
            <person name="Hashmi S."/>
            <person name="Mohebbi N."/>
            <person name="Ettenger R."/>
            <person name="Serdaroglu E."/>
            <person name="Alhasan K.A."/>
            <person name="Hashem M."/>
            <person name="Goncalves S."/>
            <person name="Ariceta G."/>
            <person name="Ubetagoyena M."/>
            <person name="Antonin W."/>
            <person name="Baig S.M."/>
            <person name="Alkuraya F.S."/>
            <person name="Shen Q."/>
            <person name="Xu H."/>
            <person name="Antignac C."/>
            <person name="Lifton R.P."/>
            <person name="Mane S."/>
            <person name="Nuernberg P."/>
            <person name="Khokha M.K."/>
            <person name="Hildebrandt F."/>
        </authorList>
    </citation>
    <scope>FUNCTION</scope>
    <scope>INVOLVEMENT IN MCPH24</scope>
    <scope>VARIANT MCPH24 306-ARG--VAL-326 DEL</scope>
    <scope>CHARACTERIZATION OF VARIANT MCPH24 306-ARG--VAL-326 DEL</scope>
</reference>
<feature type="chain" id="PRO_0000051109" description="Nucleoporin Nup37">
    <location>
        <begin position="1"/>
        <end position="326"/>
    </location>
</feature>
<feature type="repeat" description="WD 1">
    <location>
        <begin position="6"/>
        <end position="54"/>
    </location>
</feature>
<feature type="repeat" description="WD 2">
    <location>
        <begin position="61"/>
        <end position="109"/>
    </location>
</feature>
<feature type="repeat" description="WD 3">
    <location>
        <begin position="115"/>
        <end position="154"/>
    </location>
</feature>
<feature type="repeat" description="WD 4">
    <location>
        <begin position="159"/>
        <end position="195"/>
    </location>
</feature>
<feature type="repeat" description="WD 5">
    <location>
        <begin position="199"/>
        <end position="237"/>
    </location>
</feature>
<feature type="repeat" description="WD 6">
    <location>
        <begin position="242"/>
        <end position="282"/>
    </location>
</feature>
<feature type="repeat" description="WD 7">
    <location>
        <begin position="287"/>
        <end position="324"/>
    </location>
</feature>
<feature type="sequence variant" id="VAR_081367" description="In MCPH24; reduced mutant protein levels; impairs assembly of nuclear pore complex as indicated by lower number of nuclear pores in patient fibroblasts." evidence="4">
    <location>
        <begin position="306"/>
        <end position="326"/>
    </location>
</feature>
<organism>
    <name type="scientific">Homo sapiens</name>
    <name type="common">Human</name>
    <dbReference type="NCBI Taxonomy" id="9606"/>
    <lineage>
        <taxon>Eukaryota</taxon>
        <taxon>Metazoa</taxon>
        <taxon>Chordata</taxon>
        <taxon>Craniata</taxon>
        <taxon>Vertebrata</taxon>
        <taxon>Euteleostomi</taxon>
        <taxon>Mammalia</taxon>
        <taxon>Eutheria</taxon>
        <taxon>Euarchontoglires</taxon>
        <taxon>Primates</taxon>
        <taxon>Haplorrhini</taxon>
        <taxon>Catarrhini</taxon>
        <taxon>Hominidae</taxon>
        <taxon>Homo</taxon>
    </lineage>
</organism>
<keyword id="KW-0002">3D-structure</keyword>
<keyword id="KW-0131">Cell cycle</keyword>
<keyword id="KW-0132">Cell division</keyword>
<keyword id="KW-0137">Centromere</keyword>
<keyword id="KW-0158">Chromosome</keyword>
<keyword id="KW-0159">Chromosome partition</keyword>
<keyword id="KW-0225">Disease variant</keyword>
<keyword id="KW-0995">Kinetochore</keyword>
<keyword id="KW-0498">Mitosis</keyword>
<keyword id="KW-0509">mRNA transport</keyword>
<keyword id="KW-0906">Nuclear pore complex</keyword>
<keyword id="KW-0539">Nucleus</keyword>
<keyword id="KW-0905">Primary microcephaly</keyword>
<keyword id="KW-0653">Protein transport</keyword>
<keyword id="KW-1267">Proteomics identification</keyword>
<keyword id="KW-1185">Reference proteome</keyword>
<keyword id="KW-0677">Repeat</keyword>
<keyword id="KW-0811">Translocation</keyword>
<keyword id="KW-0813">Transport</keyword>
<keyword id="KW-0853">WD repeat</keyword>
<dbReference type="EMBL" id="AF514994">
    <property type="protein sequence ID" value="AAM76705.1"/>
    <property type="molecule type" value="mRNA"/>
</dbReference>
<dbReference type="EMBL" id="BC000861">
    <property type="protein sequence ID" value="AAH00861.2"/>
    <property type="molecule type" value="mRNA"/>
</dbReference>
<dbReference type="EMBL" id="AK026271">
    <property type="protein sequence ID" value="BAB15422.1"/>
    <property type="status" value="ALT_INIT"/>
    <property type="molecule type" value="mRNA"/>
</dbReference>
<dbReference type="CCDS" id="CCDS9089.1"/>
<dbReference type="RefSeq" id="NP_076962.2">
    <property type="nucleotide sequence ID" value="NM_024057.3"/>
</dbReference>
<dbReference type="PDB" id="5A9Q">
    <property type="method" value="EM"/>
    <property type="resolution" value="23.00 A"/>
    <property type="chains" value="2/K/T/b=1-326"/>
</dbReference>
<dbReference type="PDB" id="7PEQ">
    <property type="method" value="EM"/>
    <property type="resolution" value="35.00 A"/>
    <property type="chains" value="AK/BK/CK/DK=1-326"/>
</dbReference>
<dbReference type="PDB" id="7R5J">
    <property type="method" value="EM"/>
    <property type="resolution" value="50.00 A"/>
    <property type="chains" value="S0/S1/S2/S3=1-326"/>
</dbReference>
<dbReference type="PDB" id="7R5K">
    <property type="method" value="EM"/>
    <property type="resolution" value="12.00 A"/>
    <property type="chains" value="S0/S1/S2/S3=1-326"/>
</dbReference>
<dbReference type="PDBsum" id="5A9Q"/>
<dbReference type="PDBsum" id="7PEQ"/>
<dbReference type="PDBsum" id="7R5J"/>
<dbReference type="PDBsum" id="7R5K"/>
<dbReference type="EMDB" id="EMD-14321"/>
<dbReference type="EMDB" id="EMD-14322"/>
<dbReference type="SMR" id="Q8NFH4"/>
<dbReference type="BioGRID" id="122491">
    <property type="interactions" value="78"/>
</dbReference>
<dbReference type="ComplexPortal" id="CPX-873">
    <property type="entry name" value="Nuclear pore complex"/>
</dbReference>
<dbReference type="CORUM" id="Q8NFH4"/>
<dbReference type="FunCoup" id="Q8NFH4">
    <property type="interactions" value="3107"/>
</dbReference>
<dbReference type="IntAct" id="Q8NFH4">
    <property type="interactions" value="44"/>
</dbReference>
<dbReference type="MINT" id="Q8NFH4"/>
<dbReference type="STRING" id="9606.ENSP00000448054"/>
<dbReference type="TCDB" id="1.I.1.1.3">
    <property type="family name" value="the nuclear pore complex (npc) family"/>
</dbReference>
<dbReference type="GlyGen" id="Q8NFH4">
    <property type="glycosylation" value="1 site, 1 O-linked glycan (1 site)"/>
</dbReference>
<dbReference type="iPTMnet" id="Q8NFH4"/>
<dbReference type="PhosphoSitePlus" id="Q8NFH4"/>
<dbReference type="SwissPalm" id="Q8NFH4"/>
<dbReference type="BioMuta" id="NUP37"/>
<dbReference type="DMDM" id="27923820"/>
<dbReference type="jPOST" id="Q8NFH4"/>
<dbReference type="MassIVE" id="Q8NFH4"/>
<dbReference type="PaxDb" id="9606-ENSP00000448054"/>
<dbReference type="PeptideAtlas" id="Q8NFH4"/>
<dbReference type="ProteomicsDB" id="73306"/>
<dbReference type="Pumba" id="Q8NFH4"/>
<dbReference type="Antibodypedia" id="55085">
    <property type="antibodies" value="104 antibodies from 15 providers"/>
</dbReference>
<dbReference type="DNASU" id="79023"/>
<dbReference type="Ensembl" id="ENST00000251074.5">
    <property type="protein sequence ID" value="ENSP00000251074.1"/>
    <property type="gene ID" value="ENSG00000075188.9"/>
</dbReference>
<dbReference type="Ensembl" id="ENST00000552283.6">
    <property type="protein sequence ID" value="ENSP00000448054.1"/>
    <property type="gene ID" value="ENSG00000075188.9"/>
</dbReference>
<dbReference type="GeneID" id="79023"/>
<dbReference type="KEGG" id="hsa:79023"/>
<dbReference type="MANE-Select" id="ENST00000552283.6">
    <property type="protein sequence ID" value="ENSP00000448054.1"/>
    <property type="RefSeq nucleotide sequence ID" value="NM_024057.4"/>
    <property type="RefSeq protein sequence ID" value="NP_076962.2"/>
</dbReference>
<dbReference type="UCSC" id="uc001tjc.4">
    <property type="organism name" value="human"/>
</dbReference>
<dbReference type="AGR" id="HGNC:29929"/>
<dbReference type="CTD" id="79023"/>
<dbReference type="DisGeNET" id="79023"/>
<dbReference type="GeneCards" id="NUP37"/>
<dbReference type="HGNC" id="HGNC:29929">
    <property type="gene designation" value="NUP37"/>
</dbReference>
<dbReference type="HPA" id="ENSG00000075188">
    <property type="expression patterns" value="Low tissue specificity"/>
</dbReference>
<dbReference type="MalaCards" id="NUP37"/>
<dbReference type="MIM" id="609264">
    <property type="type" value="gene"/>
</dbReference>
<dbReference type="MIM" id="618179">
    <property type="type" value="phenotype"/>
</dbReference>
<dbReference type="neXtProt" id="NX_Q8NFH4"/>
<dbReference type="OpenTargets" id="ENSG00000075188"/>
<dbReference type="Orphanet" id="2512">
    <property type="disease" value="Autosomal recessive primary microcephaly"/>
</dbReference>
<dbReference type="Orphanet" id="656">
    <property type="disease" value="Hereditary steroid-resistant nephrotic syndrome"/>
</dbReference>
<dbReference type="PharmGKB" id="PA134948997"/>
<dbReference type="VEuPathDB" id="HostDB:ENSG00000075188"/>
<dbReference type="eggNOG" id="KOG0266">
    <property type="taxonomic scope" value="Eukaryota"/>
</dbReference>
<dbReference type="GeneTree" id="ENSGT00390000010777"/>
<dbReference type="HOGENOM" id="CLU_074370_0_0_1"/>
<dbReference type="InParanoid" id="Q8NFH4"/>
<dbReference type="OMA" id="FWKVQIK"/>
<dbReference type="OrthoDB" id="340259at2759"/>
<dbReference type="PAN-GO" id="Q8NFH4">
    <property type="GO annotations" value="1 GO annotation based on evolutionary models"/>
</dbReference>
<dbReference type="PhylomeDB" id="Q8NFH4"/>
<dbReference type="TreeFam" id="TF325769"/>
<dbReference type="PathwayCommons" id="Q8NFH4"/>
<dbReference type="Reactome" id="R-HSA-1169408">
    <property type="pathway name" value="ISG15 antiviral mechanism"/>
</dbReference>
<dbReference type="Reactome" id="R-HSA-141444">
    <property type="pathway name" value="Amplification of signal from unattached kinetochores via a MAD2 inhibitory signal"/>
</dbReference>
<dbReference type="Reactome" id="R-HSA-159227">
    <property type="pathway name" value="Transport of the SLBP independent Mature mRNA"/>
</dbReference>
<dbReference type="Reactome" id="R-HSA-159230">
    <property type="pathway name" value="Transport of the SLBP Dependant Mature mRNA"/>
</dbReference>
<dbReference type="Reactome" id="R-HSA-159231">
    <property type="pathway name" value="Transport of Mature mRNA Derived from an Intronless Transcript"/>
</dbReference>
<dbReference type="Reactome" id="R-HSA-159236">
    <property type="pathway name" value="Transport of Mature mRNA derived from an Intron-Containing Transcript"/>
</dbReference>
<dbReference type="Reactome" id="R-HSA-165054">
    <property type="pathway name" value="Rev-mediated nuclear export of HIV RNA"/>
</dbReference>
<dbReference type="Reactome" id="R-HSA-168271">
    <property type="pathway name" value="Transport of Ribonucleoproteins into the Host Nucleus"/>
</dbReference>
<dbReference type="Reactome" id="R-HSA-168276">
    <property type="pathway name" value="NS1 Mediated Effects on Host Pathways"/>
</dbReference>
<dbReference type="Reactome" id="R-HSA-168325">
    <property type="pathway name" value="Viral Messenger RNA Synthesis"/>
</dbReference>
<dbReference type="Reactome" id="R-HSA-168333">
    <property type="pathway name" value="NEP/NS2 Interacts with the Cellular Export Machinery"/>
</dbReference>
<dbReference type="Reactome" id="R-HSA-170822">
    <property type="pathway name" value="Regulation of Glucokinase by Glucokinase Regulatory Protein"/>
</dbReference>
<dbReference type="Reactome" id="R-HSA-180746">
    <property type="pathway name" value="Nuclear import of Rev protein"/>
</dbReference>
<dbReference type="Reactome" id="R-HSA-180910">
    <property type="pathway name" value="Vpr-mediated nuclear import of PICs"/>
</dbReference>
<dbReference type="Reactome" id="R-HSA-191859">
    <property type="pathway name" value="snRNP Assembly"/>
</dbReference>
<dbReference type="Reactome" id="R-HSA-2467813">
    <property type="pathway name" value="Separation of Sister Chromatids"/>
</dbReference>
<dbReference type="Reactome" id="R-HSA-2500257">
    <property type="pathway name" value="Resolution of Sister Chromatid Cohesion"/>
</dbReference>
<dbReference type="Reactome" id="R-HSA-3108214">
    <property type="pathway name" value="SUMOylation of DNA damage response and repair proteins"/>
</dbReference>
<dbReference type="Reactome" id="R-HSA-3232142">
    <property type="pathway name" value="SUMOylation of ubiquitinylation proteins"/>
</dbReference>
<dbReference type="Reactome" id="R-HSA-3301854">
    <property type="pathway name" value="Nuclear Pore Complex (NPC) Disassembly"/>
</dbReference>
<dbReference type="Reactome" id="R-HSA-3371453">
    <property type="pathway name" value="Regulation of HSF1-mediated heat shock response"/>
</dbReference>
<dbReference type="Reactome" id="R-HSA-4085377">
    <property type="pathway name" value="SUMOylation of SUMOylation proteins"/>
</dbReference>
<dbReference type="Reactome" id="R-HSA-4551638">
    <property type="pathway name" value="SUMOylation of chromatin organization proteins"/>
</dbReference>
<dbReference type="Reactome" id="R-HSA-4570464">
    <property type="pathway name" value="SUMOylation of RNA binding proteins"/>
</dbReference>
<dbReference type="Reactome" id="R-HSA-4615885">
    <property type="pathway name" value="SUMOylation of DNA replication proteins"/>
</dbReference>
<dbReference type="Reactome" id="R-HSA-5578749">
    <property type="pathway name" value="Transcriptional regulation by small RNAs"/>
</dbReference>
<dbReference type="Reactome" id="R-HSA-5619107">
    <property type="pathway name" value="Defective TPR may confer susceptibility towards thyroid papillary carcinoma (TPC)"/>
</dbReference>
<dbReference type="Reactome" id="R-HSA-5663220">
    <property type="pathway name" value="RHO GTPases Activate Formins"/>
</dbReference>
<dbReference type="Reactome" id="R-HSA-6784531">
    <property type="pathway name" value="tRNA processing in the nucleus"/>
</dbReference>
<dbReference type="Reactome" id="R-HSA-68877">
    <property type="pathway name" value="Mitotic Prometaphase"/>
</dbReference>
<dbReference type="Reactome" id="R-HSA-9609690">
    <property type="pathway name" value="HCMV Early Events"/>
</dbReference>
<dbReference type="Reactome" id="R-HSA-9610379">
    <property type="pathway name" value="HCMV Late Events"/>
</dbReference>
<dbReference type="Reactome" id="R-HSA-9615933">
    <property type="pathway name" value="Postmitotic nuclear pore complex (NPC) reformation"/>
</dbReference>
<dbReference type="Reactome" id="R-HSA-9648025">
    <property type="pathway name" value="EML4 and NUDC in mitotic spindle formation"/>
</dbReference>
<dbReference type="Reactome" id="R-HSA-9705671">
    <property type="pathway name" value="SARS-CoV-2 activates/modulates innate and adaptive immune responses"/>
</dbReference>
<dbReference type="SignaLink" id="Q8NFH4"/>
<dbReference type="SIGNOR" id="Q8NFH4"/>
<dbReference type="BioGRID-ORCS" id="79023">
    <property type="hits" value="84 hits in 1165 CRISPR screens"/>
</dbReference>
<dbReference type="ChiTaRS" id="NUP37">
    <property type="organism name" value="human"/>
</dbReference>
<dbReference type="GenomeRNAi" id="79023"/>
<dbReference type="Pharos" id="Q8NFH4">
    <property type="development level" value="Tbio"/>
</dbReference>
<dbReference type="PRO" id="PR:Q8NFH4"/>
<dbReference type="Proteomes" id="UP000005640">
    <property type="component" value="Chromosome 12"/>
</dbReference>
<dbReference type="RNAct" id="Q8NFH4">
    <property type="molecule type" value="protein"/>
</dbReference>
<dbReference type="Bgee" id="ENSG00000075188">
    <property type="expression patterns" value="Expressed in oocyte and 187 other cell types or tissues"/>
</dbReference>
<dbReference type="ExpressionAtlas" id="Q8NFH4">
    <property type="expression patterns" value="baseline and differential"/>
</dbReference>
<dbReference type="GO" id="GO:0005829">
    <property type="term" value="C:cytosol"/>
    <property type="evidence" value="ECO:0000304"/>
    <property type="project" value="Reactome"/>
</dbReference>
<dbReference type="GO" id="GO:0000776">
    <property type="term" value="C:kinetochore"/>
    <property type="evidence" value="ECO:0007669"/>
    <property type="project" value="UniProtKB-KW"/>
</dbReference>
<dbReference type="GO" id="GO:0005635">
    <property type="term" value="C:nuclear envelope"/>
    <property type="evidence" value="ECO:0000314"/>
    <property type="project" value="ComplexPortal"/>
</dbReference>
<dbReference type="GO" id="GO:0005643">
    <property type="term" value="C:nuclear pore"/>
    <property type="evidence" value="ECO:0000303"/>
    <property type="project" value="ComplexPortal"/>
</dbReference>
<dbReference type="GO" id="GO:0031080">
    <property type="term" value="C:nuclear pore outer ring"/>
    <property type="evidence" value="ECO:0000314"/>
    <property type="project" value="UniProtKB"/>
</dbReference>
<dbReference type="GO" id="GO:0005654">
    <property type="term" value="C:nucleoplasm"/>
    <property type="evidence" value="ECO:0000314"/>
    <property type="project" value="HPA"/>
</dbReference>
<dbReference type="GO" id="GO:0005634">
    <property type="term" value="C:nucleus"/>
    <property type="evidence" value="ECO:0007005"/>
    <property type="project" value="UniProtKB"/>
</dbReference>
<dbReference type="GO" id="GO:0051301">
    <property type="term" value="P:cell division"/>
    <property type="evidence" value="ECO:0007669"/>
    <property type="project" value="UniProtKB-KW"/>
</dbReference>
<dbReference type="GO" id="GO:0007059">
    <property type="term" value="P:chromosome segregation"/>
    <property type="evidence" value="ECO:0007669"/>
    <property type="project" value="UniProtKB-KW"/>
</dbReference>
<dbReference type="GO" id="GO:0051028">
    <property type="term" value="P:mRNA transport"/>
    <property type="evidence" value="ECO:0007669"/>
    <property type="project" value="UniProtKB-KW"/>
</dbReference>
<dbReference type="GO" id="GO:0006913">
    <property type="term" value="P:nucleocytoplasmic transport"/>
    <property type="evidence" value="ECO:0000303"/>
    <property type="project" value="ComplexPortal"/>
</dbReference>
<dbReference type="GO" id="GO:0015031">
    <property type="term" value="P:protein transport"/>
    <property type="evidence" value="ECO:0007669"/>
    <property type="project" value="UniProtKB-KW"/>
</dbReference>
<dbReference type="FunFam" id="2.130.10.10:FF:000168">
    <property type="entry name" value="Nucleoporin Nup37"/>
    <property type="match status" value="1"/>
</dbReference>
<dbReference type="Gene3D" id="2.130.10.10">
    <property type="entry name" value="YVTN repeat-like/Quinoprotein amine dehydrogenase"/>
    <property type="match status" value="1"/>
</dbReference>
<dbReference type="InterPro" id="IPR037626">
    <property type="entry name" value="NUP37"/>
</dbReference>
<dbReference type="InterPro" id="IPR015943">
    <property type="entry name" value="WD40/YVTN_repeat-like_dom_sf"/>
</dbReference>
<dbReference type="InterPro" id="IPR019775">
    <property type="entry name" value="WD40_repeat_CS"/>
</dbReference>
<dbReference type="InterPro" id="IPR036322">
    <property type="entry name" value="WD40_repeat_dom_sf"/>
</dbReference>
<dbReference type="InterPro" id="IPR001680">
    <property type="entry name" value="WD40_rpt"/>
</dbReference>
<dbReference type="PANTHER" id="PTHR22806:SF0">
    <property type="entry name" value="NUCLEOPORIN NUP37"/>
    <property type="match status" value="1"/>
</dbReference>
<dbReference type="PANTHER" id="PTHR22806">
    <property type="entry name" value="NUCLEOPORIN NUP37 P37 -RELATED"/>
    <property type="match status" value="1"/>
</dbReference>
<dbReference type="Pfam" id="PF00400">
    <property type="entry name" value="WD40"/>
    <property type="match status" value="1"/>
</dbReference>
<dbReference type="SMART" id="SM00320">
    <property type="entry name" value="WD40"/>
    <property type="match status" value="3"/>
</dbReference>
<dbReference type="SUPFAM" id="SSF50978">
    <property type="entry name" value="WD40 repeat-like"/>
    <property type="match status" value="1"/>
</dbReference>
<dbReference type="PROSITE" id="PS00678">
    <property type="entry name" value="WD_REPEATS_1"/>
    <property type="match status" value="1"/>
</dbReference>
<dbReference type="PROSITE" id="PS50082">
    <property type="entry name" value="WD_REPEATS_2"/>
    <property type="match status" value="1"/>
</dbReference>
<dbReference type="PROSITE" id="PS50294">
    <property type="entry name" value="WD_REPEATS_REGION"/>
    <property type="match status" value="1"/>
</dbReference>
<proteinExistence type="evidence at protein level"/>
<protein>
    <recommendedName>
        <fullName>Nucleoporin Nup37</fullName>
        <shortName>p37</shortName>
    </recommendedName>
    <alternativeName>
        <fullName>Nup107-160 subcomplex subunit Nup37</fullName>
    </alternativeName>
</protein>
<evidence type="ECO:0000269" key="1">
    <source>
    </source>
</evidence>
<evidence type="ECO:0000269" key="2">
    <source>
    </source>
</evidence>
<evidence type="ECO:0000269" key="3">
    <source>
    </source>
</evidence>
<evidence type="ECO:0000269" key="4">
    <source>
    </source>
</evidence>
<evidence type="ECO:0000305" key="5"/>
<gene>
    <name type="primary">NUP37</name>
</gene>
<comment type="function">
    <text evidence="3 4">Component of the Nup107-160 subcomplex of the nuclear pore complex (NPC). The Nup107-160 subcomplex is required for the assembly of a functional NPC. The Nup107-160 subcomplex is also required for normal kinetochore microtubule attachment, mitotic progression and chromosome segregation.</text>
</comment>
<comment type="subunit">
    <text evidence="1 2">Component of the Nup107-160 subcomplex of the nuclear pore complex (NPC). The Nup107-160 subcomplex includes NUP160, NUP133, NUP107, NUP98, NUP85, NUP43, NUP37, SEH1 and SEC13.</text>
</comment>
<comment type="interaction">
    <interactant intactId="EBI-2563158">
        <id>Q8NFH4</id>
    </interactant>
    <interactant intactId="EBI-718729">
        <id>P55212</id>
        <label>CASP6</label>
    </interactant>
    <organismsDiffer>false</organismsDiffer>
    <experiments>3</experiments>
</comment>
<comment type="interaction">
    <interactant intactId="EBI-2563158">
        <id>Q8NFH4</id>
    </interactant>
    <interactant intactId="EBI-21591415">
        <id>P13473-2</id>
        <label>LAMP2</label>
    </interactant>
    <organismsDiffer>false</organismsDiffer>
    <experiments>3</experiments>
</comment>
<comment type="interaction">
    <interactant intactId="EBI-2563158">
        <id>Q8NFH4</id>
    </interactant>
    <interactant intactId="EBI-1046596">
        <id>P55735</id>
        <label>SEC13</label>
    </interactant>
    <organismsDiffer>false</organismsDiffer>
    <experiments>8</experiments>
</comment>
<comment type="subcellular location">
    <subcellularLocation>
        <location>Chromosome</location>
        <location>Centromere</location>
        <location>Kinetochore</location>
    </subcellularLocation>
    <subcellularLocation>
        <location>Nucleus</location>
        <location>Nuclear pore complex</location>
    </subcellularLocation>
</comment>
<comment type="disease" evidence="4">
    <disease id="DI-05381">
        <name>Microcephaly 24, primary, autosomal recessive</name>
        <acronym>MCPH24</acronym>
        <description>A form of microcephaly, a disease defined as a head circumference more than 3 standard deviations below the age, sex and ethnically matched mean. Brain weight is markedly reduced and the cerebral cortex is disproportionately small. MCPH24 patients additionally manifest mildly impaired intellectual development, cerebellar vermis hypoplasia, and fifth finger clinodactyly.</description>
        <dbReference type="MIM" id="618179"/>
    </disease>
    <text>The disease may be caused by variants affecting the gene represented in this entry.</text>
</comment>
<comment type="sequence caution" evidence="5">
    <conflict type="erroneous initiation">
        <sequence resource="EMBL-CDS" id="BAB15422"/>
    </conflict>
</comment>
<sequence>MKQDASRNAAYTVDCEDYVHVVEFNPFENGDSGNLIAYGGNNYVVIGTCTFQEEEADVEGIQYKTLRTFHHGVRVDGIAWSPETRLDSLPPVIKFCTSAADMKIRLFTSDLQDKNEYKVLEGHTDFINGLVFDPKEGQEIASVSDDHTCRIWNLEGVQTAHFVLHSPGMSVCWHPEETFKLMVAEKNGTIRFYDLLAQQAILSLESEQVPLMSAHWCLKNTFKVGAVAGNDWLIWDITRSSYPQNKRPVHMDRACLFRWSTISENLFATTGYPGKMASQFQIHHLGHPQPILMGSVAVGSGLSWHRTLPLCVIGGDHKLLFWVTEV</sequence>